<reference key="1">
    <citation type="journal article" date="2004" name="Proc. Natl. Acad. Sci. U.S.A.">
        <title>Complete genomes of two clinical Staphylococcus aureus strains: evidence for the rapid evolution of virulence and drug resistance.</title>
        <authorList>
            <person name="Holden M.T.G."/>
            <person name="Feil E.J."/>
            <person name="Lindsay J.A."/>
            <person name="Peacock S.J."/>
            <person name="Day N.P.J."/>
            <person name="Enright M.C."/>
            <person name="Foster T.J."/>
            <person name="Moore C.E."/>
            <person name="Hurst L."/>
            <person name="Atkin R."/>
            <person name="Barron A."/>
            <person name="Bason N."/>
            <person name="Bentley S.D."/>
            <person name="Chillingworth C."/>
            <person name="Chillingworth T."/>
            <person name="Churcher C."/>
            <person name="Clark L."/>
            <person name="Corton C."/>
            <person name="Cronin A."/>
            <person name="Doggett J."/>
            <person name="Dowd L."/>
            <person name="Feltwell T."/>
            <person name="Hance Z."/>
            <person name="Harris B."/>
            <person name="Hauser H."/>
            <person name="Holroyd S."/>
            <person name="Jagels K."/>
            <person name="James K.D."/>
            <person name="Lennard N."/>
            <person name="Line A."/>
            <person name="Mayes R."/>
            <person name="Moule S."/>
            <person name="Mungall K."/>
            <person name="Ormond D."/>
            <person name="Quail M.A."/>
            <person name="Rabbinowitsch E."/>
            <person name="Rutherford K.M."/>
            <person name="Sanders M."/>
            <person name="Sharp S."/>
            <person name="Simmonds M."/>
            <person name="Stevens K."/>
            <person name="Whitehead S."/>
            <person name="Barrell B.G."/>
            <person name="Spratt B.G."/>
            <person name="Parkhill J."/>
        </authorList>
    </citation>
    <scope>NUCLEOTIDE SEQUENCE [LARGE SCALE GENOMIC DNA]</scope>
    <source>
        <strain>MSSA476</strain>
    </source>
</reference>
<protein>
    <recommendedName>
        <fullName evidence="1">Dihydroxy-acid dehydratase</fullName>
        <shortName evidence="1">DAD</shortName>
        <ecNumber evidence="1">4.2.1.9</ecNumber>
    </recommendedName>
</protein>
<evidence type="ECO:0000255" key="1">
    <source>
        <dbReference type="HAMAP-Rule" id="MF_00012"/>
    </source>
</evidence>
<dbReference type="EC" id="4.2.1.9" evidence="1"/>
<dbReference type="EMBL" id="BX571857">
    <property type="protein sequence ID" value="CAG43765.1"/>
    <property type="molecule type" value="Genomic_DNA"/>
</dbReference>
<dbReference type="RefSeq" id="WP_001255780.1">
    <property type="nucleotide sequence ID" value="NC_002953.3"/>
</dbReference>
<dbReference type="SMR" id="Q6G7Q4"/>
<dbReference type="KEGG" id="sas:SAS1958"/>
<dbReference type="HOGENOM" id="CLU_014271_4_2_9"/>
<dbReference type="UniPathway" id="UPA00047">
    <property type="reaction ID" value="UER00057"/>
</dbReference>
<dbReference type="UniPathway" id="UPA00049">
    <property type="reaction ID" value="UER00061"/>
</dbReference>
<dbReference type="GO" id="GO:0005829">
    <property type="term" value="C:cytosol"/>
    <property type="evidence" value="ECO:0007669"/>
    <property type="project" value="TreeGrafter"/>
</dbReference>
<dbReference type="GO" id="GO:0051537">
    <property type="term" value="F:2 iron, 2 sulfur cluster binding"/>
    <property type="evidence" value="ECO:0007669"/>
    <property type="project" value="UniProtKB-UniRule"/>
</dbReference>
<dbReference type="GO" id="GO:0004160">
    <property type="term" value="F:dihydroxy-acid dehydratase activity"/>
    <property type="evidence" value="ECO:0007669"/>
    <property type="project" value="UniProtKB-UniRule"/>
</dbReference>
<dbReference type="GO" id="GO:0000287">
    <property type="term" value="F:magnesium ion binding"/>
    <property type="evidence" value="ECO:0007669"/>
    <property type="project" value="UniProtKB-UniRule"/>
</dbReference>
<dbReference type="GO" id="GO:0009097">
    <property type="term" value="P:isoleucine biosynthetic process"/>
    <property type="evidence" value="ECO:0007669"/>
    <property type="project" value="UniProtKB-UniRule"/>
</dbReference>
<dbReference type="GO" id="GO:0009099">
    <property type="term" value="P:L-valine biosynthetic process"/>
    <property type="evidence" value="ECO:0007669"/>
    <property type="project" value="UniProtKB-UniRule"/>
</dbReference>
<dbReference type="FunFam" id="3.50.30.80:FF:000001">
    <property type="entry name" value="Dihydroxy-acid dehydratase"/>
    <property type="match status" value="1"/>
</dbReference>
<dbReference type="Gene3D" id="3.50.30.80">
    <property type="entry name" value="IlvD/EDD C-terminal domain-like"/>
    <property type="match status" value="1"/>
</dbReference>
<dbReference type="HAMAP" id="MF_00012">
    <property type="entry name" value="IlvD"/>
    <property type="match status" value="1"/>
</dbReference>
<dbReference type="InterPro" id="IPR042096">
    <property type="entry name" value="Dihydro-acid_dehy_C"/>
</dbReference>
<dbReference type="InterPro" id="IPR004404">
    <property type="entry name" value="DihydroxyA_deHydtase"/>
</dbReference>
<dbReference type="InterPro" id="IPR020558">
    <property type="entry name" value="DiOHA_6PGluconate_deHydtase_CS"/>
</dbReference>
<dbReference type="InterPro" id="IPR056740">
    <property type="entry name" value="ILV_EDD_C"/>
</dbReference>
<dbReference type="InterPro" id="IPR000581">
    <property type="entry name" value="ILV_EDD_N"/>
</dbReference>
<dbReference type="InterPro" id="IPR037237">
    <property type="entry name" value="IlvD/EDD_N"/>
</dbReference>
<dbReference type="NCBIfam" id="TIGR00110">
    <property type="entry name" value="ilvD"/>
    <property type="match status" value="1"/>
</dbReference>
<dbReference type="NCBIfam" id="NF002068">
    <property type="entry name" value="PRK00911.1"/>
    <property type="match status" value="1"/>
</dbReference>
<dbReference type="PANTHER" id="PTHR43661">
    <property type="entry name" value="D-XYLONATE DEHYDRATASE"/>
    <property type="match status" value="1"/>
</dbReference>
<dbReference type="PANTHER" id="PTHR43661:SF3">
    <property type="entry name" value="D-XYLONATE DEHYDRATASE YAGF-RELATED"/>
    <property type="match status" value="1"/>
</dbReference>
<dbReference type="Pfam" id="PF24877">
    <property type="entry name" value="ILV_EDD_C"/>
    <property type="match status" value="1"/>
</dbReference>
<dbReference type="Pfam" id="PF00920">
    <property type="entry name" value="ILVD_EDD_N"/>
    <property type="match status" value="1"/>
</dbReference>
<dbReference type="SUPFAM" id="SSF143975">
    <property type="entry name" value="IlvD/EDD N-terminal domain-like"/>
    <property type="match status" value="1"/>
</dbReference>
<dbReference type="SUPFAM" id="SSF52016">
    <property type="entry name" value="LeuD/IlvD-like"/>
    <property type="match status" value="1"/>
</dbReference>
<dbReference type="PROSITE" id="PS00886">
    <property type="entry name" value="ILVD_EDD_1"/>
    <property type="match status" value="1"/>
</dbReference>
<dbReference type="PROSITE" id="PS00887">
    <property type="entry name" value="ILVD_EDD_2"/>
    <property type="match status" value="1"/>
</dbReference>
<keyword id="KW-0001">2Fe-2S</keyword>
<keyword id="KW-0028">Amino-acid biosynthesis</keyword>
<keyword id="KW-0100">Branched-chain amino acid biosynthesis</keyword>
<keyword id="KW-0408">Iron</keyword>
<keyword id="KW-0411">Iron-sulfur</keyword>
<keyword id="KW-0456">Lyase</keyword>
<keyword id="KW-0460">Magnesium</keyword>
<keyword id="KW-0479">Metal-binding</keyword>
<organism>
    <name type="scientific">Staphylococcus aureus (strain MSSA476)</name>
    <dbReference type="NCBI Taxonomy" id="282459"/>
    <lineage>
        <taxon>Bacteria</taxon>
        <taxon>Bacillati</taxon>
        <taxon>Bacillota</taxon>
        <taxon>Bacilli</taxon>
        <taxon>Bacillales</taxon>
        <taxon>Staphylococcaceae</taxon>
        <taxon>Staphylococcus</taxon>
    </lineage>
</organism>
<proteinExistence type="inferred from homology"/>
<comment type="function">
    <text evidence="1">Functions in the biosynthesis of branched-chain amino acids. Catalyzes the dehydration of (2R,3R)-2,3-dihydroxy-3-methylpentanoate (2,3-dihydroxy-3-methylvalerate) into 2-oxo-3-methylpentanoate (2-oxo-3-methylvalerate) and of (2R)-2,3-dihydroxy-3-methylbutanoate (2,3-dihydroxyisovalerate) into 2-oxo-3-methylbutanoate (2-oxoisovalerate), the penultimate precursor to L-isoleucine and L-valine, respectively.</text>
</comment>
<comment type="catalytic activity">
    <reaction evidence="1">
        <text>(2R)-2,3-dihydroxy-3-methylbutanoate = 3-methyl-2-oxobutanoate + H2O</text>
        <dbReference type="Rhea" id="RHEA:24809"/>
        <dbReference type="ChEBI" id="CHEBI:11851"/>
        <dbReference type="ChEBI" id="CHEBI:15377"/>
        <dbReference type="ChEBI" id="CHEBI:49072"/>
        <dbReference type="EC" id="4.2.1.9"/>
    </reaction>
    <physiologicalReaction direction="left-to-right" evidence="1">
        <dbReference type="Rhea" id="RHEA:24810"/>
    </physiologicalReaction>
</comment>
<comment type="catalytic activity">
    <reaction evidence="1">
        <text>(2R,3R)-2,3-dihydroxy-3-methylpentanoate = (S)-3-methyl-2-oxopentanoate + H2O</text>
        <dbReference type="Rhea" id="RHEA:27694"/>
        <dbReference type="ChEBI" id="CHEBI:15377"/>
        <dbReference type="ChEBI" id="CHEBI:35146"/>
        <dbReference type="ChEBI" id="CHEBI:49258"/>
        <dbReference type="EC" id="4.2.1.9"/>
    </reaction>
    <physiologicalReaction direction="left-to-right" evidence="1">
        <dbReference type="Rhea" id="RHEA:27695"/>
    </physiologicalReaction>
</comment>
<comment type="cofactor">
    <cofactor evidence="1">
        <name>[2Fe-2S] cluster</name>
        <dbReference type="ChEBI" id="CHEBI:190135"/>
    </cofactor>
    <text evidence="1">Binds 1 [2Fe-2S] cluster per subunit. This cluster acts as a Lewis acid cofactor.</text>
</comment>
<comment type="cofactor">
    <cofactor evidence="1">
        <name>Mg(2+)</name>
        <dbReference type="ChEBI" id="CHEBI:18420"/>
    </cofactor>
</comment>
<comment type="pathway">
    <text evidence="1">Amino-acid biosynthesis; L-isoleucine biosynthesis; L-isoleucine from 2-oxobutanoate: step 3/4.</text>
</comment>
<comment type="pathway">
    <text evidence="1">Amino-acid biosynthesis; L-valine biosynthesis; L-valine from pyruvate: step 3/4.</text>
</comment>
<comment type="subunit">
    <text evidence="1">Homodimer.</text>
</comment>
<comment type="similarity">
    <text evidence="1">Belongs to the IlvD/Edd family.</text>
</comment>
<sequence>MRSDMIKKGDHQAPARSLLHATGALKSPTDMNKPFVAICNSYIDIVPGHVHLRELADIAKEAIREAGAIPFEFNTIGVDDGIAMGHIGMRYSLPSREIIADAAETVINAHWFDGVFYIPNCDKITPGMILAAMRTNVPAIFCSGGPMKAGLSAHGKALTLSSMFEAVGAFKEGSISKEEFLDMEQNACPTCGSCAGMFTANSMNCLMEVLGLALPYNGTALAVSDQRREMIRQAAFKLVENIKNDLKPRDIVTREAIDDAFALDMAMGGSTNTVLHTLAIANEAGIDYDLERINAIAKRTPYLSKIAPSSSYSMHDVHEAGGVPAIINELMKKDGTLHPDRITVTGKTLRENNEGKEIKNFDVIHPLDAPYDAQGGLSILFGNIAPKGAVIKVGGVDPSIKTFTGKAICFNSHDEAVEAIDNRTVRAGHVVVIRYEGPKGGPGMPEMLAPTSSIVGRGLGKDVALITDGRFSGATRGIAVGHISPEAASGGPIALIEDGDEITIDLTNRTLNVNQPEDVLARRRESLTPFKAKVKTGYLARYTALVTSANTGGVMQVPENLI</sequence>
<gene>
    <name evidence="1" type="primary">ilvD</name>
    <name type="ordered locus">SAS1958</name>
</gene>
<name>ILVD_STAAS</name>
<feature type="chain" id="PRO_0000103509" description="Dihydroxy-acid dehydratase">
    <location>
        <begin position="1"/>
        <end position="562"/>
    </location>
</feature>
<feature type="active site" description="Proton acceptor" evidence="1">
    <location>
        <position position="472"/>
    </location>
</feature>
<feature type="binding site" evidence="1">
    <location>
        <position position="80"/>
    </location>
    <ligand>
        <name>Mg(2+)</name>
        <dbReference type="ChEBI" id="CHEBI:18420"/>
    </ligand>
</feature>
<feature type="binding site" evidence="1">
    <location>
        <position position="121"/>
    </location>
    <ligand>
        <name>[2Fe-2S] cluster</name>
        <dbReference type="ChEBI" id="CHEBI:190135"/>
    </ligand>
</feature>
<feature type="binding site" evidence="1">
    <location>
        <position position="122"/>
    </location>
    <ligand>
        <name>Mg(2+)</name>
        <dbReference type="ChEBI" id="CHEBI:18420"/>
    </ligand>
</feature>
<feature type="binding site" description="via carbamate group" evidence="1">
    <location>
        <position position="123"/>
    </location>
    <ligand>
        <name>Mg(2+)</name>
        <dbReference type="ChEBI" id="CHEBI:18420"/>
    </ligand>
</feature>
<feature type="binding site" evidence="1">
    <location>
        <position position="194"/>
    </location>
    <ligand>
        <name>[2Fe-2S] cluster</name>
        <dbReference type="ChEBI" id="CHEBI:190135"/>
    </ligand>
</feature>
<feature type="binding site" evidence="1">
    <location>
        <position position="446"/>
    </location>
    <ligand>
        <name>Mg(2+)</name>
        <dbReference type="ChEBI" id="CHEBI:18420"/>
    </ligand>
</feature>
<feature type="modified residue" description="N6-carboxylysine" evidence="1">
    <location>
        <position position="123"/>
    </location>
</feature>
<accession>Q6G7Q4</accession>